<feature type="initiator methionine" description="Removed" evidence="2">
    <location>
        <position position="1"/>
    </location>
</feature>
<feature type="chain" id="PRO_0000124050" description="Actin-related protein 2/3 complex subunit 4">
    <location>
        <begin position="2"/>
        <end position="168"/>
    </location>
</feature>
<feature type="modified residue" description="N-acetylthreonine" evidence="2">
    <location>
        <position position="2"/>
    </location>
</feature>
<reference key="1">
    <citation type="submission" date="2000-05" db="EMBL/GenBank/DDBJ databases">
        <title>Full-length sequencing of some human and murine muscular transcripts (Telethon Italy project B41).</title>
        <authorList>
            <person name="Ievolella C."/>
            <person name="Campagna D."/>
            <person name="Lanfranchi G."/>
        </authorList>
    </citation>
    <scope>NUCLEOTIDE SEQUENCE [MRNA]</scope>
    <source>
        <tissue>Skeletal muscle</tissue>
    </source>
</reference>
<reference key="2">
    <citation type="journal article" date="2005" name="Science">
        <title>The transcriptional landscape of the mammalian genome.</title>
        <authorList>
            <person name="Carninci P."/>
            <person name="Kasukawa T."/>
            <person name="Katayama S."/>
            <person name="Gough J."/>
            <person name="Frith M.C."/>
            <person name="Maeda N."/>
            <person name="Oyama R."/>
            <person name="Ravasi T."/>
            <person name="Lenhard B."/>
            <person name="Wells C."/>
            <person name="Kodzius R."/>
            <person name="Shimokawa K."/>
            <person name="Bajic V.B."/>
            <person name="Brenner S.E."/>
            <person name="Batalov S."/>
            <person name="Forrest A.R."/>
            <person name="Zavolan M."/>
            <person name="Davis M.J."/>
            <person name="Wilming L.G."/>
            <person name="Aidinis V."/>
            <person name="Allen J.E."/>
            <person name="Ambesi-Impiombato A."/>
            <person name="Apweiler R."/>
            <person name="Aturaliya R.N."/>
            <person name="Bailey T.L."/>
            <person name="Bansal M."/>
            <person name="Baxter L."/>
            <person name="Beisel K.W."/>
            <person name="Bersano T."/>
            <person name="Bono H."/>
            <person name="Chalk A.M."/>
            <person name="Chiu K.P."/>
            <person name="Choudhary V."/>
            <person name="Christoffels A."/>
            <person name="Clutterbuck D.R."/>
            <person name="Crowe M.L."/>
            <person name="Dalla E."/>
            <person name="Dalrymple B.P."/>
            <person name="de Bono B."/>
            <person name="Della Gatta G."/>
            <person name="di Bernardo D."/>
            <person name="Down T."/>
            <person name="Engstrom P."/>
            <person name="Fagiolini M."/>
            <person name="Faulkner G."/>
            <person name="Fletcher C.F."/>
            <person name="Fukushima T."/>
            <person name="Furuno M."/>
            <person name="Futaki S."/>
            <person name="Gariboldi M."/>
            <person name="Georgii-Hemming P."/>
            <person name="Gingeras T.R."/>
            <person name="Gojobori T."/>
            <person name="Green R.E."/>
            <person name="Gustincich S."/>
            <person name="Harbers M."/>
            <person name="Hayashi Y."/>
            <person name="Hensch T.K."/>
            <person name="Hirokawa N."/>
            <person name="Hill D."/>
            <person name="Huminiecki L."/>
            <person name="Iacono M."/>
            <person name="Ikeo K."/>
            <person name="Iwama A."/>
            <person name="Ishikawa T."/>
            <person name="Jakt M."/>
            <person name="Kanapin A."/>
            <person name="Katoh M."/>
            <person name="Kawasawa Y."/>
            <person name="Kelso J."/>
            <person name="Kitamura H."/>
            <person name="Kitano H."/>
            <person name="Kollias G."/>
            <person name="Krishnan S.P."/>
            <person name="Kruger A."/>
            <person name="Kummerfeld S.K."/>
            <person name="Kurochkin I.V."/>
            <person name="Lareau L.F."/>
            <person name="Lazarevic D."/>
            <person name="Lipovich L."/>
            <person name="Liu J."/>
            <person name="Liuni S."/>
            <person name="McWilliam S."/>
            <person name="Madan Babu M."/>
            <person name="Madera M."/>
            <person name="Marchionni L."/>
            <person name="Matsuda H."/>
            <person name="Matsuzawa S."/>
            <person name="Miki H."/>
            <person name="Mignone F."/>
            <person name="Miyake S."/>
            <person name="Morris K."/>
            <person name="Mottagui-Tabar S."/>
            <person name="Mulder N."/>
            <person name="Nakano N."/>
            <person name="Nakauchi H."/>
            <person name="Ng P."/>
            <person name="Nilsson R."/>
            <person name="Nishiguchi S."/>
            <person name="Nishikawa S."/>
            <person name="Nori F."/>
            <person name="Ohara O."/>
            <person name="Okazaki Y."/>
            <person name="Orlando V."/>
            <person name="Pang K.C."/>
            <person name="Pavan W.J."/>
            <person name="Pavesi G."/>
            <person name="Pesole G."/>
            <person name="Petrovsky N."/>
            <person name="Piazza S."/>
            <person name="Reed J."/>
            <person name="Reid J.F."/>
            <person name="Ring B.Z."/>
            <person name="Ringwald M."/>
            <person name="Rost B."/>
            <person name="Ruan Y."/>
            <person name="Salzberg S.L."/>
            <person name="Sandelin A."/>
            <person name="Schneider C."/>
            <person name="Schoenbach C."/>
            <person name="Sekiguchi K."/>
            <person name="Semple C.A."/>
            <person name="Seno S."/>
            <person name="Sessa L."/>
            <person name="Sheng Y."/>
            <person name="Shibata Y."/>
            <person name="Shimada H."/>
            <person name="Shimada K."/>
            <person name="Silva D."/>
            <person name="Sinclair B."/>
            <person name="Sperling S."/>
            <person name="Stupka E."/>
            <person name="Sugiura K."/>
            <person name="Sultana R."/>
            <person name="Takenaka Y."/>
            <person name="Taki K."/>
            <person name="Tammoja K."/>
            <person name="Tan S.L."/>
            <person name="Tang S."/>
            <person name="Taylor M.S."/>
            <person name="Tegner J."/>
            <person name="Teichmann S.A."/>
            <person name="Ueda H.R."/>
            <person name="van Nimwegen E."/>
            <person name="Verardo R."/>
            <person name="Wei C.L."/>
            <person name="Yagi K."/>
            <person name="Yamanishi H."/>
            <person name="Zabarovsky E."/>
            <person name="Zhu S."/>
            <person name="Zimmer A."/>
            <person name="Hide W."/>
            <person name="Bult C."/>
            <person name="Grimmond S.M."/>
            <person name="Teasdale R.D."/>
            <person name="Liu E.T."/>
            <person name="Brusic V."/>
            <person name="Quackenbush J."/>
            <person name="Wahlestedt C."/>
            <person name="Mattick J.S."/>
            <person name="Hume D.A."/>
            <person name="Kai C."/>
            <person name="Sasaki D."/>
            <person name="Tomaru Y."/>
            <person name="Fukuda S."/>
            <person name="Kanamori-Katayama M."/>
            <person name="Suzuki M."/>
            <person name="Aoki J."/>
            <person name="Arakawa T."/>
            <person name="Iida J."/>
            <person name="Imamura K."/>
            <person name="Itoh M."/>
            <person name="Kato T."/>
            <person name="Kawaji H."/>
            <person name="Kawagashira N."/>
            <person name="Kawashima T."/>
            <person name="Kojima M."/>
            <person name="Kondo S."/>
            <person name="Konno H."/>
            <person name="Nakano K."/>
            <person name="Ninomiya N."/>
            <person name="Nishio T."/>
            <person name="Okada M."/>
            <person name="Plessy C."/>
            <person name="Shibata K."/>
            <person name="Shiraki T."/>
            <person name="Suzuki S."/>
            <person name="Tagami M."/>
            <person name="Waki K."/>
            <person name="Watahiki A."/>
            <person name="Okamura-Oho Y."/>
            <person name="Suzuki H."/>
            <person name="Kawai J."/>
            <person name="Hayashizaki Y."/>
        </authorList>
    </citation>
    <scope>NUCLEOTIDE SEQUENCE [LARGE SCALE MRNA]</scope>
    <source>
        <strain>C57BL/6J</strain>
        <tissue>Bone marrow</tissue>
        <tissue>Egg</tissue>
        <tissue>Hypothalamus</tissue>
        <tissue>Mammary gland</tissue>
        <tissue>Pituitary</tissue>
        <tissue>Thymus</tissue>
    </source>
</reference>
<reference key="3">
    <citation type="journal article" date="2004" name="Genome Res.">
        <title>The status, quality, and expansion of the NIH full-length cDNA project: the Mammalian Gene Collection (MGC).</title>
        <authorList>
            <consortium name="The MGC Project Team"/>
        </authorList>
    </citation>
    <scope>NUCLEOTIDE SEQUENCE [LARGE SCALE MRNA]</scope>
    <source>
        <tissue>Kidney</tissue>
    </source>
</reference>
<reference key="4">
    <citation type="submission" date="2008-03" db="UniProtKB">
        <authorList>
            <person name="Sumpton D.P."/>
            <person name="Sandilands E."/>
            <person name="Frame M.C."/>
            <person name="Bienvenut W.V."/>
        </authorList>
    </citation>
    <scope>PROTEIN SEQUENCE OF 2-41; 45-55; 61-71; 98-105; 107-128; 131-150 AND 159-166</scope>
    <scope>CLEAVAGE OF INITIATOR METHIONINE</scope>
    <scope>ACETYLATION AT THR-2</scope>
    <scope>IDENTIFICATION BY MASS SPECTROMETRY</scope>
    <source>
        <tissue>Embryonic fibroblast</tissue>
    </source>
</reference>
<reference key="5">
    <citation type="submission" date="2007-04" db="UniProtKB">
        <authorList>
            <person name="Lubec G."/>
            <person name="Kang S.U."/>
        </authorList>
    </citation>
    <scope>PROTEIN SEQUENCE OF 98-105</scope>
    <scope>IDENTIFICATION BY MASS SPECTROMETRY</scope>
    <source>
        <strain>C57BL/6J</strain>
        <tissue>Brain</tissue>
    </source>
</reference>
<reference key="6">
    <citation type="journal article" date="2010" name="Cell">
        <title>A tissue-specific atlas of mouse protein phosphorylation and expression.</title>
        <authorList>
            <person name="Huttlin E.L."/>
            <person name="Jedrychowski M.P."/>
            <person name="Elias J.E."/>
            <person name="Goswami T."/>
            <person name="Rad R."/>
            <person name="Beausoleil S.A."/>
            <person name="Villen J."/>
            <person name="Haas W."/>
            <person name="Sowa M.E."/>
            <person name="Gygi S.P."/>
        </authorList>
    </citation>
    <scope>IDENTIFICATION BY MASS SPECTROMETRY [LARGE SCALE ANALYSIS]</scope>
    <source>
        <tissue>Brain</tissue>
        <tissue>Brown adipose tissue</tissue>
        <tissue>Heart</tissue>
        <tissue>Kidney</tissue>
        <tissue>Liver</tissue>
        <tissue>Lung</tissue>
        <tissue>Pancreas</tissue>
        <tissue>Spleen</tissue>
        <tissue>Testis</tissue>
    </source>
</reference>
<keyword id="KW-0002">3D-structure</keyword>
<keyword id="KW-0007">Acetylation</keyword>
<keyword id="KW-0009">Actin-binding</keyword>
<keyword id="KW-0966">Cell projection</keyword>
<keyword id="KW-0963">Cytoplasm</keyword>
<keyword id="KW-0206">Cytoskeleton</keyword>
<keyword id="KW-0903">Direct protein sequencing</keyword>
<keyword id="KW-0539">Nucleus</keyword>
<keyword id="KW-1185">Reference proteome</keyword>
<evidence type="ECO:0000250" key="1">
    <source>
        <dbReference type="UniProtKB" id="P59998"/>
    </source>
</evidence>
<evidence type="ECO:0000269" key="2">
    <source ref="4"/>
</evidence>
<evidence type="ECO:0000305" key="3"/>
<protein>
    <recommendedName>
        <fullName>Actin-related protein 2/3 complex subunit 4</fullName>
    </recommendedName>
    <alternativeName>
        <fullName>Arp2/3 complex 20 kDa subunit</fullName>
        <shortName>p20-ARC</shortName>
    </alternativeName>
</protein>
<accession>P59999</accession>
<accession>O15509</accession>
<accession>Q3UWV4</accession>
<organism>
    <name type="scientific">Mus musculus</name>
    <name type="common">Mouse</name>
    <dbReference type="NCBI Taxonomy" id="10090"/>
    <lineage>
        <taxon>Eukaryota</taxon>
        <taxon>Metazoa</taxon>
        <taxon>Chordata</taxon>
        <taxon>Craniata</taxon>
        <taxon>Vertebrata</taxon>
        <taxon>Euteleostomi</taxon>
        <taxon>Mammalia</taxon>
        <taxon>Eutheria</taxon>
        <taxon>Euarchontoglires</taxon>
        <taxon>Glires</taxon>
        <taxon>Rodentia</taxon>
        <taxon>Myomorpha</taxon>
        <taxon>Muroidea</taxon>
        <taxon>Muridae</taxon>
        <taxon>Murinae</taxon>
        <taxon>Mus</taxon>
        <taxon>Mus</taxon>
    </lineage>
</organism>
<proteinExistence type="evidence at protein level"/>
<sequence length="168" mass="19667">MTATLRPYLSAVRATLQAALCLENFSSQVVERHNKPEVEVRSSKELLLQPVTISRNEKEKVLIEGSINSVRVSIAVKQADEIEKILCHKFMRFMMMRAENFFILRRKPVEGYDISFLITNFHTEQMYKHKLVDFVIHFMEEIDKEISEMKLSVNARARIVAEEFLKNF</sequence>
<gene>
    <name type="primary">Arpc4</name>
    <name type="synonym">Arc20</name>
</gene>
<name>ARPC4_MOUSE</name>
<dbReference type="EMBL" id="AJ278129">
    <property type="protein sequence ID" value="CAC34583.1"/>
    <property type="molecule type" value="mRNA"/>
</dbReference>
<dbReference type="EMBL" id="AK017993">
    <property type="protein sequence ID" value="BAB31026.1"/>
    <property type="molecule type" value="mRNA"/>
</dbReference>
<dbReference type="EMBL" id="AK039215">
    <property type="protein sequence ID" value="BAC30279.1"/>
    <property type="molecule type" value="mRNA"/>
</dbReference>
<dbReference type="EMBL" id="AK077325">
    <property type="protein sequence ID" value="BAC36751.1"/>
    <property type="molecule type" value="mRNA"/>
</dbReference>
<dbReference type="EMBL" id="AK133626">
    <property type="protein sequence ID" value="BAE21755.1"/>
    <property type="molecule type" value="mRNA"/>
</dbReference>
<dbReference type="EMBL" id="AK136082">
    <property type="protein sequence ID" value="BAE22810.1"/>
    <property type="molecule type" value="mRNA"/>
</dbReference>
<dbReference type="EMBL" id="AK150690">
    <property type="protein sequence ID" value="BAE29769.1"/>
    <property type="molecule type" value="mRNA"/>
</dbReference>
<dbReference type="EMBL" id="AK153380">
    <property type="protein sequence ID" value="BAE31946.1"/>
    <property type="molecule type" value="mRNA"/>
</dbReference>
<dbReference type="EMBL" id="AK166440">
    <property type="protein sequence ID" value="BAE38777.1"/>
    <property type="molecule type" value="mRNA"/>
</dbReference>
<dbReference type="EMBL" id="BC015280">
    <property type="status" value="NOT_ANNOTATED_CDS"/>
    <property type="molecule type" value="mRNA"/>
</dbReference>
<dbReference type="CCDS" id="CCDS20417.1"/>
<dbReference type="RefSeq" id="NP_001163956.1">
    <property type="nucleotide sequence ID" value="NM_001170485.1"/>
</dbReference>
<dbReference type="RefSeq" id="NP_001163957.1">
    <property type="nucleotide sequence ID" value="NM_001170486.1"/>
</dbReference>
<dbReference type="RefSeq" id="NP_080828.1">
    <property type="nucleotide sequence ID" value="NM_026552.3"/>
</dbReference>
<dbReference type="PDB" id="7AQK">
    <property type="method" value="EM"/>
    <property type="resolution" value="9.00 A"/>
    <property type="chains" value="f=1-168"/>
</dbReference>
<dbReference type="PDBsum" id="7AQK"/>
<dbReference type="EMDB" id="EMD-11869"/>
<dbReference type="SMR" id="P59999"/>
<dbReference type="BioGRID" id="212649">
    <property type="interactions" value="21"/>
</dbReference>
<dbReference type="FunCoup" id="P59999">
    <property type="interactions" value="2165"/>
</dbReference>
<dbReference type="IntAct" id="P59999">
    <property type="interactions" value="5"/>
</dbReference>
<dbReference type="STRING" id="10090.ENSMUSP00000114839"/>
<dbReference type="GlyGen" id="P59999">
    <property type="glycosylation" value="1 site, 1 O-linked glycan (1 site)"/>
</dbReference>
<dbReference type="iPTMnet" id="P59999"/>
<dbReference type="PhosphoSitePlus" id="P59999"/>
<dbReference type="SwissPalm" id="P59999"/>
<dbReference type="jPOST" id="P59999"/>
<dbReference type="PaxDb" id="10090-ENSMUSP00000114839"/>
<dbReference type="PeptideAtlas" id="P59999"/>
<dbReference type="ProteomicsDB" id="281834"/>
<dbReference type="Pumba" id="P59999"/>
<dbReference type="TopDownProteomics" id="P59999"/>
<dbReference type="Antibodypedia" id="34895">
    <property type="antibodies" value="207 antibodies from 29 providers"/>
</dbReference>
<dbReference type="DNASU" id="68089"/>
<dbReference type="Ensembl" id="ENSMUST00000156898.5">
    <property type="protein sequence ID" value="ENSMUSP00000114839.2"/>
    <property type="gene ID" value="ENSMUSG00000079426.14"/>
</dbReference>
<dbReference type="GeneID" id="68089"/>
<dbReference type="KEGG" id="mmu:68089"/>
<dbReference type="UCSC" id="uc009dfs.2">
    <property type="organism name" value="mouse"/>
</dbReference>
<dbReference type="AGR" id="MGI:1915339"/>
<dbReference type="CTD" id="10093"/>
<dbReference type="MGI" id="MGI:1915339">
    <property type="gene designation" value="Arpc4"/>
</dbReference>
<dbReference type="VEuPathDB" id="HostDB:ENSMUSG00000079426"/>
<dbReference type="eggNOG" id="KOG1876">
    <property type="taxonomic scope" value="Eukaryota"/>
</dbReference>
<dbReference type="GeneTree" id="ENSGT00390000016233"/>
<dbReference type="HOGENOM" id="CLU_084855_1_0_1"/>
<dbReference type="InParanoid" id="P59999"/>
<dbReference type="OMA" id="EAYLGEF"/>
<dbReference type="OrthoDB" id="336240at2759"/>
<dbReference type="PhylomeDB" id="P59999"/>
<dbReference type="TreeFam" id="TF105621"/>
<dbReference type="Reactome" id="R-MMU-2029482">
    <property type="pathway name" value="Regulation of actin dynamics for phagocytic cup formation"/>
</dbReference>
<dbReference type="Reactome" id="R-MMU-3928662">
    <property type="pathway name" value="EPHB-mediated forward signaling"/>
</dbReference>
<dbReference type="Reactome" id="R-MMU-5663213">
    <property type="pathway name" value="RHO GTPases Activate WASPs and WAVEs"/>
</dbReference>
<dbReference type="Reactome" id="R-MMU-8856828">
    <property type="pathway name" value="Clathrin-mediated endocytosis"/>
</dbReference>
<dbReference type="BioGRID-ORCS" id="68089">
    <property type="hits" value="30 hits in 76 CRISPR screens"/>
</dbReference>
<dbReference type="CD-CODE" id="CE726F99">
    <property type="entry name" value="Postsynaptic density"/>
</dbReference>
<dbReference type="ChiTaRS" id="Arpc4">
    <property type="organism name" value="mouse"/>
</dbReference>
<dbReference type="PRO" id="PR:P59999"/>
<dbReference type="Proteomes" id="UP000000589">
    <property type="component" value="Chromosome 6"/>
</dbReference>
<dbReference type="RNAct" id="P59999">
    <property type="molecule type" value="protein"/>
</dbReference>
<dbReference type="Bgee" id="ENSMUSG00000079426">
    <property type="expression patterns" value="Expressed in granulocyte and 233 other cell types or tissues"/>
</dbReference>
<dbReference type="ExpressionAtlas" id="P59999">
    <property type="expression patterns" value="baseline and differential"/>
</dbReference>
<dbReference type="GO" id="GO:0005885">
    <property type="term" value="C:Arp2/3 protein complex"/>
    <property type="evidence" value="ECO:0000250"/>
    <property type="project" value="UniProtKB"/>
</dbReference>
<dbReference type="GO" id="GO:0042995">
    <property type="term" value="C:cell projection"/>
    <property type="evidence" value="ECO:0007669"/>
    <property type="project" value="UniProtKB-SubCell"/>
</dbReference>
<dbReference type="GO" id="GO:0005737">
    <property type="term" value="C:cytoplasm"/>
    <property type="evidence" value="ECO:0007669"/>
    <property type="project" value="UniProtKB-KW"/>
</dbReference>
<dbReference type="GO" id="GO:0005634">
    <property type="term" value="C:nucleus"/>
    <property type="evidence" value="ECO:0000250"/>
    <property type="project" value="UniProtKB"/>
</dbReference>
<dbReference type="GO" id="GO:0035861">
    <property type="term" value="C:site of double-strand break"/>
    <property type="evidence" value="ECO:0000250"/>
    <property type="project" value="UniProtKB"/>
</dbReference>
<dbReference type="GO" id="GO:0051015">
    <property type="term" value="F:actin filament binding"/>
    <property type="evidence" value="ECO:0007669"/>
    <property type="project" value="Ensembl"/>
</dbReference>
<dbReference type="GO" id="GO:0019899">
    <property type="term" value="F:enzyme binding"/>
    <property type="evidence" value="ECO:0007669"/>
    <property type="project" value="Ensembl"/>
</dbReference>
<dbReference type="GO" id="GO:0030674">
    <property type="term" value="F:protein-macromolecule adaptor activity"/>
    <property type="evidence" value="ECO:0007669"/>
    <property type="project" value="Ensembl"/>
</dbReference>
<dbReference type="GO" id="GO:0005200">
    <property type="term" value="F:structural constituent of cytoskeleton"/>
    <property type="evidence" value="ECO:0007669"/>
    <property type="project" value="Ensembl"/>
</dbReference>
<dbReference type="GO" id="GO:0030041">
    <property type="term" value="P:actin filament polymerization"/>
    <property type="evidence" value="ECO:0007669"/>
    <property type="project" value="InterPro"/>
</dbReference>
<dbReference type="GO" id="GO:0034314">
    <property type="term" value="P:Arp2/3 complex-mediated actin nucleation"/>
    <property type="evidence" value="ECO:0007669"/>
    <property type="project" value="Ensembl"/>
</dbReference>
<dbReference type="FunFam" id="3.30.1460.20:FF:000001">
    <property type="entry name" value="Actin-related protein 2/3 complex subunit 4"/>
    <property type="match status" value="1"/>
</dbReference>
<dbReference type="Gene3D" id="3.30.1460.20">
    <property type="match status" value="1"/>
</dbReference>
<dbReference type="InterPro" id="IPR034666">
    <property type="entry name" value="ARPC2/4"/>
</dbReference>
<dbReference type="InterPro" id="IPR008384">
    <property type="entry name" value="ARPC4"/>
</dbReference>
<dbReference type="PANTHER" id="PTHR22629:SF0">
    <property type="entry name" value="ACTIN-RELATED PROTEIN 2_3 COMPLEX SUBUNIT 4"/>
    <property type="match status" value="1"/>
</dbReference>
<dbReference type="PANTHER" id="PTHR22629">
    <property type="entry name" value="ARP2/3 COMPLEX 20 KD SUBUNIT"/>
    <property type="match status" value="1"/>
</dbReference>
<dbReference type="Pfam" id="PF05856">
    <property type="entry name" value="ARPC4"/>
    <property type="match status" value="1"/>
</dbReference>
<dbReference type="PIRSF" id="PIRSF039100">
    <property type="entry name" value="ARPC4"/>
    <property type="match status" value="1"/>
</dbReference>
<dbReference type="SUPFAM" id="SSF69645">
    <property type="entry name" value="Arp2/3 complex subunits"/>
    <property type="match status" value="1"/>
</dbReference>
<comment type="function">
    <text evidence="1">Actin-binding component of the Arp2/3 complex, a multiprotein complex that mediates actin polymerization upon stimulation by nucleation-promoting factor (NPF). The Arp2/3 complex mediates the formation of branched actin networks in the cytoplasm, providing the force for cell motility. In addition to its role in the cytoplasmic cytoskeleton, the Arp2/3 complex also promotes actin polymerization in the nucleus, thereby regulating gene transcription and repair of damaged DNA. The Arp2/3 complex promotes homologous recombination (HR) repair in response to DNA damage by promoting nuclear actin polymerization, leading to drive motility of double-strand breaks (DSBs).</text>
</comment>
<comment type="subunit">
    <text evidence="1">Component of the Arp2/3 complex composed of ACTR2/ARP2, ACTR3/ARP3, ARPC1B/p41-ARC, ARPC2/p34-ARC, ARPC3/p21-ARC, ARPC4/p20-ARC and ARPC5/p16-ARC.</text>
</comment>
<comment type="subcellular location">
    <subcellularLocation>
        <location evidence="1">Cytoplasm</location>
        <location evidence="1">Cytoskeleton</location>
    </subcellularLocation>
    <subcellularLocation>
        <location evidence="1">Cell projection</location>
    </subcellularLocation>
    <subcellularLocation>
        <location evidence="1">Nucleus</location>
    </subcellularLocation>
</comment>
<comment type="similarity">
    <text evidence="3">Belongs to the ARPC4 family.</text>
</comment>